<organism>
    <name type="scientific">Ureaplasma parvum serovar 3 (strain ATCC 700970)</name>
    <dbReference type="NCBI Taxonomy" id="273119"/>
    <lineage>
        <taxon>Bacteria</taxon>
        <taxon>Bacillati</taxon>
        <taxon>Mycoplasmatota</taxon>
        <taxon>Mycoplasmoidales</taxon>
        <taxon>Mycoplasmoidaceae</taxon>
        <taxon>Ureaplasma</taxon>
    </lineage>
</organism>
<dbReference type="EC" id="2.8.1.13" evidence="1"/>
<dbReference type="EMBL" id="AF222894">
    <property type="protein sequence ID" value="AAF30812.1"/>
    <property type="molecule type" value="Genomic_DNA"/>
</dbReference>
<dbReference type="RefSeq" id="WP_006688685.1">
    <property type="nucleotide sequence ID" value="NC_002162.1"/>
</dbReference>
<dbReference type="SMR" id="Q9PQ88"/>
<dbReference type="STRING" id="273119.UU402"/>
<dbReference type="EnsemblBacteria" id="AAF30812">
    <property type="protein sequence ID" value="AAF30812"/>
    <property type="gene ID" value="UU402"/>
</dbReference>
<dbReference type="GeneID" id="29672313"/>
<dbReference type="KEGG" id="uur:UU402"/>
<dbReference type="eggNOG" id="COG0482">
    <property type="taxonomic scope" value="Bacteria"/>
</dbReference>
<dbReference type="HOGENOM" id="CLU_035188_1_0_14"/>
<dbReference type="OrthoDB" id="9800696at2"/>
<dbReference type="Proteomes" id="UP000000423">
    <property type="component" value="Chromosome"/>
</dbReference>
<dbReference type="GO" id="GO:0005737">
    <property type="term" value="C:cytoplasm"/>
    <property type="evidence" value="ECO:0007669"/>
    <property type="project" value="UniProtKB-SubCell"/>
</dbReference>
<dbReference type="GO" id="GO:0005524">
    <property type="term" value="F:ATP binding"/>
    <property type="evidence" value="ECO:0007669"/>
    <property type="project" value="UniProtKB-KW"/>
</dbReference>
<dbReference type="GO" id="GO:0000049">
    <property type="term" value="F:tRNA binding"/>
    <property type="evidence" value="ECO:0007669"/>
    <property type="project" value="UniProtKB-KW"/>
</dbReference>
<dbReference type="GO" id="GO:0103016">
    <property type="term" value="F:tRNA-uridine 2-sulfurtransferase activity"/>
    <property type="evidence" value="ECO:0007669"/>
    <property type="project" value="UniProtKB-EC"/>
</dbReference>
<dbReference type="GO" id="GO:0002143">
    <property type="term" value="P:tRNA wobble position uridine thiolation"/>
    <property type="evidence" value="ECO:0007669"/>
    <property type="project" value="TreeGrafter"/>
</dbReference>
<dbReference type="CDD" id="cd01998">
    <property type="entry name" value="MnmA_TRMU-like"/>
    <property type="match status" value="1"/>
</dbReference>
<dbReference type="FunFam" id="2.30.30.280:FF:000001">
    <property type="entry name" value="tRNA-specific 2-thiouridylase MnmA"/>
    <property type="match status" value="1"/>
</dbReference>
<dbReference type="FunFam" id="3.40.50.620:FF:000004">
    <property type="entry name" value="tRNA-specific 2-thiouridylase MnmA"/>
    <property type="match status" value="1"/>
</dbReference>
<dbReference type="Gene3D" id="2.30.30.280">
    <property type="entry name" value="Adenine nucleotide alpha hydrolases-like domains"/>
    <property type="match status" value="1"/>
</dbReference>
<dbReference type="Gene3D" id="3.40.50.620">
    <property type="entry name" value="HUPs"/>
    <property type="match status" value="1"/>
</dbReference>
<dbReference type="Gene3D" id="2.40.30.10">
    <property type="entry name" value="Translation factors"/>
    <property type="match status" value="1"/>
</dbReference>
<dbReference type="HAMAP" id="MF_00144">
    <property type="entry name" value="tRNA_thiouridyl_MnmA"/>
    <property type="match status" value="1"/>
</dbReference>
<dbReference type="InterPro" id="IPR004506">
    <property type="entry name" value="MnmA-like"/>
</dbReference>
<dbReference type="InterPro" id="IPR046885">
    <property type="entry name" value="MnmA-like_C"/>
</dbReference>
<dbReference type="InterPro" id="IPR046884">
    <property type="entry name" value="MnmA-like_central"/>
</dbReference>
<dbReference type="InterPro" id="IPR023382">
    <property type="entry name" value="MnmA-like_central_sf"/>
</dbReference>
<dbReference type="InterPro" id="IPR014729">
    <property type="entry name" value="Rossmann-like_a/b/a_fold"/>
</dbReference>
<dbReference type="NCBIfam" id="NF001138">
    <property type="entry name" value="PRK00143.1"/>
    <property type="match status" value="1"/>
</dbReference>
<dbReference type="NCBIfam" id="TIGR00420">
    <property type="entry name" value="trmU"/>
    <property type="match status" value="1"/>
</dbReference>
<dbReference type="PANTHER" id="PTHR11933:SF5">
    <property type="entry name" value="MITOCHONDRIAL TRNA-SPECIFIC 2-THIOURIDYLASE 1"/>
    <property type="match status" value="1"/>
</dbReference>
<dbReference type="PANTHER" id="PTHR11933">
    <property type="entry name" value="TRNA 5-METHYLAMINOMETHYL-2-THIOURIDYLATE -METHYLTRANSFERASE"/>
    <property type="match status" value="1"/>
</dbReference>
<dbReference type="Pfam" id="PF03054">
    <property type="entry name" value="tRNA_Me_trans"/>
    <property type="match status" value="1"/>
</dbReference>
<dbReference type="Pfam" id="PF20258">
    <property type="entry name" value="tRNA_Me_trans_C"/>
    <property type="match status" value="1"/>
</dbReference>
<dbReference type="Pfam" id="PF20259">
    <property type="entry name" value="tRNA_Me_trans_M"/>
    <property type="match status" value="1"/>
</dbReference>
<dbReference type="SUPFAM" id="SSF52402">
    <property type="entry name" value="Adenine nucleotide alpha hydrolases-like"/>
    <property type="match status" value="1"/>
</dbReference>
<keyword id="KW-0067">ATP-binding</keyword>
<keyword id="KW-0963">Cytoplasm</keyword>
<keyword id="KW-1015">Disulfide bond</keyword>
<keyword id="KW-0547">Nucleotide-binding</keyword>
<keyword id="KW-1185">Reference proteome</keyword>
<keyword id="KW-0694">RNA-binding</keyword>
<keyword id="KW-0808">Transferase</keyword>
<keyword id="KW-0819">tRNA processing</keyword>
<keyword id="KW-0820">tRNA-binding</keyword>
<name>MNMA_UREPA</name>
<reference key="1">
    <citation type="journal article" date="2000" name="Nature">
        <title>The complete sequence of the mucosal pathogen Ureaplasma urealyticum.</title>
        <authorList>
            <person name="Glass J.I."/>
            <person name="Lefkowitz E.J."/>
            <person name="Glass J.S."/>
            <person name="Heiner C.R."/>
            <person name="Chen E.Y."/>
            <person name="Cassell G.H."/>
        </authorList>
    </citation>
    <scope>NUCLEOTIDE SEQUENCE [LARGE SCALE GENOMIC DNA]</scope>
    <source>
        <strain>ATCC 700970</strain>
    </source>
</reference>
<evidence type="ECO:0000255" key="1">
    <source>
        <dbReference type="HAMAP-Rule" id="MF_00144"/>
    </source>
</evidence>
<proteinExistence type="inferred from homology"/>
<sequence>MEVKVKKRVVVGLSGGVDSSVSALLLKQEGYEVIGLFMSNWDTIANFENNHEFNKTHQGCESELDYQDAQAVAQKIGIPLYRVEFIKEYWDNVFEYFLSEYQKNRTPNPDILCNQFIKFDSFLNYAKNELQADYIAMGHYARVKHDRNSSFLLKAIDTNKDQTYFLCNLNQNQLQNVLFPIGHLTKLQVRAIAKKHGLITANKKDSTGICFIGERNFKTFLQNYIPNQPGQIINIVNNQIIGHHIGTMYYTIGQRKGLNLGGMNERMFVCDKDIDKKIIYVAPSSFEKQYLISTQALIENINFIEPYNPQIPIMVRFRHRQDLIIVNDFLPIKNTKNVLINYESARAITPGQYAVFYQNDHCIGGGIVSKTNIGHQKVDFLVYKS</sequence>
<gene>
    <name evidence="1" type="primary">mnmA</name>
    <name type="synonym">trmU</name>
    <name type="ordered locus">UU402</name>
</gene>
<protein>
    <recommendedName>
        <fullName evidence="1">tRNA-specific 2-thiouridylase MnmA</fullName>
        <ecNumber evidence="1">2.8.1.13</ecNumber>
    </recommendedName>
</protein>
<feature type="chain" id="PRO_0000121696" description="tRNA-specific 2-thiouridylase MnmA">
    <location>
        <begin position="1"/>
        <end position="385"/>
    </location>
</feature>
<feature type="region of interest" description="Interaction with target base in tRNA" evidence="1">
    <location>
        <begin position="108"/>
        <end position="110"/>
    </location>
</feature>
<feature type="region of interest" description="Interaction with tRNA" evidence="1">
    <location>
        <begin position="160"/>
        <end position="162"/>
    </location>
</feature>
<feature type="active site" description="Nucleophile" evidence="1">
    <location>
        <position position="113"/>
    </location>
</feature>
<feature type="active site" description="Cysteine persulfide intermediate" evidence="1">
    <location>
        <position position="210"/>
    </location>
</feature>
<feature type="binding site" evidence="1">
    <location>
        <begin position="12"/>
        <end position="19"/>
    </location>
    <ligand>
        <name>ATP</name>
        <dbReference type="ChEBI" id="CHEBI:30616"/>
    </ligand>
</feature>
<feature type="binding site" evidence="1">
    <location>
        <position position="38"/>
    </location>
    <ligand>
        <name>ATP</name>
        <dbReference type="ChEBI" id="CHEBI:30616"/>
    </ligand>
</feature>
<feature type="binding site" evidence="1">
    <location>
        <position position="138"/>
    </location>
    <ligand>
        <name>ATP</name>
        <dbReference type="ChEBI" id="CHEBI:30616"/>
    </ligand>
</feature>
<feature type="site" description="Interaction with tRNA" evidence="1">
    <location>
        <position position="139"/>
    </location>
</feature>
<feature type="site" description="Interaction with tRNA" evidence="1">
    <location>
        <position position="352"/>
    </location>
</feature>
<feature type="disulfide bond" description="Alternate" evidence="1">
    <location>
        <begin position="113"/>
        <end position="210"/>
    </location>
</feature>
<comment type="function">
    <text evidence="1">Catalyzes the 2-thiolation of uridine at the wobble position (U34) of tRNA, leading to the formation of s(2)U34.</text>
</comment>
<comment type="catalytic activity">
    <reaction evidence="1">
        <text>S-sulfanyl-L-cysteinyl-[protein] + uridine(34) in tRNA + AH2 + ATP = 2-thiouridine(34) in tRNA + L-cysteinyl-[protein] + A + AMP + diphosphate + H(+)</text>
        <dbReference type="Rhea" id="RHEA:47032"/>
        <dbReference type="Rhea" id="RHEA-COMP:10131"/>
        <dbReference type="Rhea" id="RHEA-COMP:11726"/>
        <dbReference type="Rhea" id="RHEA-COMP:11727"/>
        <dbReference type="Rhea" id="RHEA-COMP:11728"/>
        <dbReference type="ChEBI" id="CHEBI:13193"/>
        <dbReference type="ChEBI" id="CHEBI:15378"/>
        <dbReference type="ChEBI" id="CHEBI:17499"/>
        <dbReference type="ChEBI" id="CHEBI:29950"/>
        <dbReference type="ChEBI" id="CHEBI:30616"/>
        <dbReference type="ChEBI" id="CHEBI:33019"/>
        <dbReference type="ChEBI" id="CHEBI:61963"/>
        <dbReference type="ChEBI" id="CHEBI:65315"/>
        <dbReference type="ChEBI" id="CHEBI:87170"/>
        <dbReference type="ChEBI" id="CHEBI:456215"/>
        <dbReference type="EC" id="2.8.1.13"/>
    </reaction>
</comment>
<comment type="subcellular location">
    <subcellularLocation>
        <location evidence="1">Cytoplasm</location>
    </subcellularLocation>
</comment>
<comment type="similarity">
    <text evidence="1">Belongs to the MnmA/TRMU family.</text>
</comment>
<accession>Q9PQ88</accession>